<dbReference type="EMBL" id="AK001676">
    <property type="protein sequence ID" value="BAA91829.1"/>
    <property type="molecule type" value="mRNA"/>
</dbReference>
<dbReference type="EMBL" id="AK001754">
    <property type="protein sequence ID" value="BAA91885.1"/>
    <property type="status" value="ALT_INIT"/>
    <property type="molecule type" value="mRNA"/>
</dbReference>
<dbReference type="EMBL" id="AK022572">
    <property type="protein sequence ID" value="BAB14106.1"/>
    <property type="status" value="ALT_INIT"/>
    <property type="molecule type" value="mRNA"/>
</dbReference>
<dbReference type="EMBL" id="AK314431">
    <property type="protein sequence ID" value="BAG37045.1"/>
    <property type="molecule type" value="mRNA"/>
</dbReference>
<dbReference type="EMBL" id="AL121990">
    <property type="status" value="NOT_ANNOTATED_CDS"/>
    <property type="molecule type" value="Genomic_DNA"/>
</dbReference>
<dbReference type="EMBL" id="AL139252">
    <property type="status" value="NOT_ANNOTATED_CDS"/>
    <property type="molecule type" value="Genomic_DNA"/>
</dbReference>
<dbReference type="EMBL" id="AL160004">
    <property type="status" value="NOT_ANNOTATED_CDS"/>
    <property type="molecule type" value="Genomic_DNA"/>
</dbReference>
<dbReference type="EMBL" id="BC020107">
    <property type="protein sequence ID" value="AAH20107.1"/>
    <property type="molecule type" value="mRNA"/>
</dbReference>
<dbReference type="CCDS" id="CCDS1579.1"/>
<dbReference type="RefSeq" id="NP_060700.2">
    <property type="nucleotide sequence ID" value="NM_018230.2"/>
</dbReference>
<dbReference type="PDB" id="1XKS">
    <property type="method" value="X-ray"/>
    <property type="resolution" value="2.35 A"/>
    <property type="chains" value="A=67-514"/>
</dbReference>
<dbReference type="PDB" id="3CQC">
    <property type="method" value="X-ray"/>
    <property type="resolution" value="2.53 A"/>
    <property type="chains" value="B=935-1156"/>
</dbReference>
<dbReference type="PDB" id="3CQG">
    <property type="method" value="X-ray"/>
    <property type="resolution" value="3.00 A"/>
    <property type="chains" value="B=934-1156"/>
</dbReference>
<dbReference type="PDB" id="3I4R">
    <property type="method" value="X-ray"/>
    <property type="resolution" value="3.53 A"/>
    <property type="chains" value="B=517-1156"/>
</dbReference>
<dbReference type="PDB" id="5A9Q">
    <property type="method" value="EM"/>
    <property type="resolution" value="23.00 A"/>
    <property type="chains" value="3/C/L/U=1-1156"/>
</dbReference>
<dbReference type="PDB" id="7PEQ">
    <property type="method" value="EM"/>
    <property type="resolution" value="35.00 A"/>
    <property type="chains" value="AC/BC/CC/DC=1-1156"/>
</dbReference>
<dbReference type="PDB" id="7R5J">
    <property type="method" value="EM"/>
    <property type="resolution" value="50.00 A"/>
    <property type="chains" value="K0/K1/K2/K3=1-1156"/>
</dbReference>
<dbReference type="PDB" id="7R5K">
    <property type="method" value="EM"/>
    <property type="resolution" value="12.00 A"/>
    <property type="chains" value="K0/K1/K2/K3=1-1156"/>
</dbReference>
<dbReference type="PDBsum" id="1XKS"/>
<dbReference type="PDBsum" id="3CQC"/>
<dbReference type="PDBsum" id="3CQG"/>
<dbReference type="PDBsum" id="3I4R"/>
<dbReference type="PDBsum" id="5A9Q"/>
<dbReference type="PDBsum" id="7PEQ"/>
<dbReference type="PDBsum" id="7R5J"/>
<dbReference type="PDBsum" id="7R5K"/>
<dbReference type="EMDB" id="EMD-14321"/>
<dbReference type="EMDB" id="EMD-14322"/>
<dbReference type="SMR" id="Q8WUM0"/>
<dbReference type="BioGRID" id="120864">
    <property type="interactions" value="197"/>
</dbReference>
<dbReference type="ComplexPortal" id="CPX-873">
    <property type="entry name" value="Nuclear pore complex"/>
</dbReference>
<dbReference type="CORUM" id="Q8WUM0"/>
<dbReference type="FunCoup" id="Q8WUM0">
    <property type="interactions" value="4570"/>
</dbReference>
<dbReference type="IntAct" id="Q8WUM0">
    <property type="interactions" value="98"/>
</dbReference>
<dbReference type="MINT" id="Q8WUM0"/>
<dbReference type="STRING" id="9606.ENSP00000261396"/>
<dbReference type="TCDB" id="1.I.1.1.3">
    <property type="family name" value="the nuclear pore complex (npc) family"/>
</dbReference>
<dbReference type="GlyGen" id="Q8WUM0">
    <property type="glycosylation" value="1 site, 1 O-linked glycan (1 site)"/>
</dbReference>
<dbReference type="iPTMnet" id="Q8WUM0"/>
<dbReference type="PhosphoSitePlus" id="Q8WUM0"/>
<dbReference type="SwissPalm" id="Q8WUM0"/>
<dbReference type="BioMuta" id="NUP133"/>
<dbReference type="DMDM" id="143811430"/>
<dbReference type="jPOST" id="Q8WUM0"/>
<dbReference type="MassIVE" id="Q8WUM0"/>
<dbReference type="PaxDb" id="9606-ENSP00000261396"/>
<dbReference type="PeptideAtlas" id="Q8WUM0"/>
<dbReference type="ProteomicsDB" id="74694"/>
<dbReference type="Pumba" id="Q8WUM0"/>
<dbReference type="Antibodypedia" id="34676">
    <property type="antibodies" value="135 antibodies from 29 providers"/>
</dbReference>
<dbReference type="DNASU" id="55746"/>
<dbReference type="Ensembl" id="ENST00000261396.6">
    <property type="protein sequence ID" value="ENSP00000261396.3"/>
    <property type="gene ID" value="ENSG00000069248.12"/>
</dbReference>
<dbReference type="GeneID" id="55746"/>
<dbReference type="KEGG" id="hsa:55746"/>
<dbReference type="MANE-Select" id="ENST00000261396.6">
    <property type="protein sequence ID" value="ENSP00000261396.3"/>
    <property type="RefSeq nucleotide sequence ID" value="NM_018230.3"/>
    <property type="RefSeq protein sequence ID" value="NP_060700.2"/>
</dbReference>
<dbReference type="UCSC" id="uc001htn.4">
    <property type="organism name" value="human"/>
</dbReference>
<dbReference type="AGR" id="HGNC:18016"/>
<dbReference type="CTD" id="55746"/>
<dbReference type="DisGeNET" id="55746"/>
<dbReference type="GeneCards" id="NUP133"/>
<dbReference type="HGNC" id="HGNC:18016">
    <property type="gene designation" value="NUP133"/>
</dbReference>
<dbReference type="HPA" id="ENSG00000069248">
    <property type="expression patterns" value="Low tissue specificity"/>
</dbReference>
<dbReference type="MalaCards" id="NUP133"/>
<dbReference type="MIM" id="607613">
    <property type="type" value="gene"/>
</dbReference>
<dbReference type="MIM" id="618177">
    <property type="type" value="phenotype"/>
</dbReference>
<dbReference type="MIM" id="618349">
    <property type="type" value="phenotype"/>
</dbReference>
<dbReference type="neXtProt" id="NX_Q8WUM0"/>
<dbReference type="OpenTargets" id="ENSG00000069248"/>
<dbReference type="Orphanet" id="2065">
    <property type="disease" value="Galloway-Mowat syndrome"/>
</dbReference>
<dbReference type="Orphanet" id="656">
    <property type="disease" value="Hereditary steroid-resistant nephrotic syndrome"/>
</dbReference>
<dbReference type="PharmGKB" id="PA31847"/>
<dbReference type="VEuPathDB" id="HostDB:ENSG00000069248"/>
<dbReference type="eggNOG" id="KOG4121">
    <property type="taxonomic scope" value="Eukaryota"/>
</dbReference>
<dbReference type="GeneTree" id="ENSGT00390000011529"/>
<dbReference type="HOGENOM" id="CLU_008593_0_0_1"/>
<dbReference type="InParanoid" id="Q8WUM0"/>
<dbReference type="OMA" id="TRKYEEY"/>
<dbReference type="OrthoDB" id="103454at2759"/>
<dbReference type="PAN-GO" id="Q8WUM0">
    <property type="GO annotations" value="5 GO annotations based on evolutionary models"/>
</dbReference>
<dbReference type="PhylomeDB" id="Q8WUM0"/>
<dbReference type="TreeFam" id="TF106141"/>
<dbReference type="PathwayCommons" id="Q8WUM0"/>
<dbReference type="Reactome" id="R-HSA-1169408">
    <property type="pathway name" value="ISG15 antiviral mechanism"/>
</dbReference>
<dbReference type="Reactome" id="R-HSA-141444">
    <property type="pathway name" value="Amplification of signal from unattached kinetochores via a MAD2 inhibitory signal"/>
</dbReference>
<dbReference type="Reactome" id="R-HSA-159227">
    <property type="pathway name" value="Transport of the SLBP independent Mature mRNA"/>
</dbReference>
<dbReference type="Reactome" id="R-HSA-159230">
    <property type="pathway name" value="Transport of the SLBP Dependant Mature mRNA"/>
</dbReference>
<dbReference type="Reactome" id="R-HSA-159231">
    <property type="pathway name" value="Transport of Mature mRNA Derived from an Intronless Transcript"/>
</dbReference>
<dbReference type="Reactome" id="R-HSA-159236">
    <property type="pathway name" value="Transport of Mature mRNA derived from an Intron-Containing Transcript"/>
</dbReference>
<dbReference type="Reactome" id="R-HSA-165054">
    <property type="pathway name" value="Rev-mediated nuclear export of HIV RNA"/>
</dbReference>
<dbReference type="Reactome" id="R-HSA-168271">
    <property type="pathway name" value="Transport of Ribonucleoproteins into the Host Nucleus"/>
</dbReference>
<dbReference type="Reactome" id="R-HSA-168276">
    <property type="pathway name" value="NS1 Mediated Effects on Host Pathways"/>
</dbReference>
<dbReference type="Reactome" id="R-HSA-168325">
    <property type="pathway name" value="Viral Messenger RNA Synthesis"/>
</dbReference>
<dbReference type="Reactome" id="R-HSA-168333">
    <property type="pathway name" value="NEP/NS2 Interacts with the Cellular Export Machinery"/>
</dbReference>
<dbReference type="Reactome" id="R-HSA-170822">
    <property type="pathway name" value="Regulation of Glucokinase by Glucokinase Regulatory Protein"/>
</dbReference>
<dbReference type="Reactome" id="R-HSA-180746">
    <property type="pathway name" value="Nuclear import of Rev protein"/>
</dbReference>
<dbReference type="Reactome" id="R-HSA-180910">
    <property type="pathway name" value="Vpr-mediated nuclear import of PICs"/>
</dbReference>
<dbReference type="Reactome" id="R-HSA-191859">
    <property type="pathway name" value="snRNP Assembly"/>
</dbReference>
<dbReference type="Reactome" id="R-HSA-2467813">
    <property type="pathway name" value="Separation of Sister Chromatids"/>
</dbReference>
<dbReference type="Reactome" id="R-HSA-2500257">
    <property type="pathway name" value="Resolution of Sister Chromatid Cohesion"/>
</dbReference>
<dbReference type="Reactome" id="R-HSA-3108214">
    <property type="pathway name" value="SUMOylation of DNA damage response and repair proteins"/>
</dbReference>
<dbReference type="Reactome" id="R-HSA-3232142">
    <property type="pathway name" value="SUMOylation of ubiquitinylation proteins"/>
</dbReference>
<dbReference type="Reactome" id="R-HSA-3301854">
    <property type="pathway name" value="Nuclear Pore Complex (NPC) Disassembly"/>
</dbReference>
<dbReference type="Reactome" id="R-HSA-3371453">
    <property type="pathway name" value="Regulation of HSF1-mediated heat shock response"/>
</dbReference>
<dbReference type="Reactome" id="R-HSA-4085377">
    <property type="pathway name" value="SUMOylation of SUMOylation proteins"/>
</dbReference>
<dbReference type="Reactome" id="R-HSA-4551638">
    <property type="pathway name" value="SUMOylation of chromatin organization proteins"/>
</dbReference>
<dbReference type="Reactome" id="R-HSA-4570464">
    <property type="pathway name" value="SUMOylation of RNA binding proteins"/>
</dbReference>
<dbReference type="Reactome" id="R-HSA-4615885">
    <property type="pathway name" value="SUMOylation of DNA replication proteins"/>
</dbReference>
<dbReference type="Reactome" id="R-HSA-5578749">
    <property type="pathway name" value="Transcriptional regulation by small RNAs"/>
</dbReference>
<dbReference type="Reactome" id="R-HSA-5619107">
    <property type="pathway name" value="Defective TPR may confer susceptibility towards thyroid papillary carcinoma (TPC)"/>
</dbReference>
<dbReference type="Reactome" id="R-HSA-5663220">
    <property type="pathway name" value="RHO GTPases Activate Formins"/>
</dbReference>
<dbReference type="Reactome" id="R-HSA-6784531">
    <property type="pathway name" value="tRNA processing in the nucleus"/>
</dbReference>
<dbReference type="Reactome" id="R-HSA-68877">
    <property type="pathway name" value="Mitotic Prometaphase"/>
</dbReference>
<dbReference type="Reactome" id="R-HSA-9609690">
    <property type="pathway name" value="HCMV Early Events"/>
</dbReference>
<dbReference type="Reactome" id="R-HSA-9610379">
    <property type="pathway name" value="HCMV Late Events"/>
</dbReference>
<dbReference type="Reactome" id="R-HSA-9615933">
    <property type="pathway name" value="Postmitotic nuclear pore complex (NPC) reformation"/>
</dbReference>
<dbReference type="Reactome" id="R-HSA-9648025">
    <property type="pathway name" value="EML4 and NUDC in mitotic spindle formation"/>
</dbReference>
<dbReference type="Reactome" id="R-HSA-9705671">
    <property type="pathway name" value="SARS-CoV-2 activates/modulates innate and adaptive immune responses"/>
</dbReference>
<dbReference type="SignaLink" id="Q8WUM0"/>
<dbReference type="SIGNOR" id="Q8WUM0"/>
<dbReference type="BioGRID-ORCS" id="55746">
    <property type="hits" value="799 hits in 1160 CRISPR screens"/>
</dbReference>
<dbReference type="CD-CODE" id="D6A53B8E">
    <property type="entry name" value="Nuclear pore complex"/>
</dbReference>
<dbReference type="ChiTaRS" id="NUP133">
    <property type="organism name" value="human"/>
</dbReference>
<dbReference type="EvolutionaryTrace" id="Q8WUM0"/>
<dbReference type="GeneWiki" id="NUP133"/>
<dbReference type="GenomeRNAi" id="55746"/>
<dbReference type="Pharos" id="Q8WUM0">
    <property type="development level" value="Tbio"/>
</dbReference>
<dbReference type="PRO" id="PR:Q8WUM0"/>
<dbReference type="Proteomes" id="UP000005640">
    <property type="component" value="Chromosome 1"/>
</dbReference>
<dbReference type="RNAct" id="Q8WUM0">
    <property type="molecule type" value="protein"/>
</dbReference>
<dbReference type="Bgee" id="ENSG00000069248">
    <property type="expression patterns" value="Expressed in secondary oocyte and 209 other cell types or tissues"/>
</dbReference>
<dbReference type="GO" id="GO:0005829">
    <property type="term" value="C:cytosol"/>
    <property type="evidence" value="ECO:0000304"/>
    <property type="project" value="Reactome"/>
</dbReference>
<dbReference type="GO" id="GO:0000776">
    <property type="term" value="C:kinetochore"/>
    <property type="evidence" value="ECO:0007669"/>
    <property type="project" value="UniProtKB-KW"/>
</dbReference>
<dbReference type="GO" id="GO:0016020">
    <property type="term" value="C:membrane"/>
    <property type="evidence" value="ECO:0007005"/>
    <property type="project" value="UniProtKB"/>
</dbReference>
<dbReference type="GO" id="GO:0005635">
    <property type="term" value="C:nuclear envelope"/>
    <property type="evidence" value="ECO:0000314"/>
    <property type="project" value="ComplexPortal"/>
</dbReference>
<dbReference type="GO" id="GO:0031965">
    <property type="term" value="C:nuclear membrane"/>
    <property type="evidence" value="ECO:0000314"/>
    <property type="project" value="HPA"/>
</dbReference>
<dbReference type="GO" id="GO:0005643">
    <property type="term" value="C:nuclear pore"/>
    <property type="evidence" value="ECO:0000314"/>
    <property type="project" value="UniProtKB"/>
</dbReference>
<dbReference type="GO" id="GO:0031080">
    <property type="term" value="C:nuclear pore outer ring"/>
    <property type="evidence" value="ECO:0000314"/>
    <property type="project" value="UniProtKB"/>
</dbReference>
<dbReference type="GO" id="GO:0017056">
    <property type="term" value="F:structural constituent of nuclear pore"/>
    <property type="evidence" value="ECO:0000314"/>
    <property type="project" value="UniProtKB"/>
</dbReference>
<dbReference type="GO" id="GO:0006406">
    <property type="term" value="P:mRNA export from nucleus"/>
    <property type="evidence" value="ECO:0000314"/>
    <property type="project" value="UniProtKB"/>
</dbReference>
<dbReference type="GO" id="GO:0072006">
    <property type="term" value="P:nephron development"/>
    <property type="evidence" value="ECO:0000315"/>
    <property type="project" value="UniProtKB"/>
</dbReference>
<dbReference type="GO" id="GO:0021915">
    <property type="term" value="P:neural tube development"/>
    <property type="evidence" value="ECO:0007669"/>
    <property type="project" value="Ensembl"/>
</dbReference>
<dbReference type="GO" id="GO:0022008">
    <property type="term" value="P:neurogenesis"/>
    <property type="evidence" value="ECO:0007669"/>
    <property type="project" value="Ensembl"/>
</dbReference>
<dbReference type="GO" id="GO:0006999">
    <property type="term" value="P:nuclear pore organization"/>
    <property type="evidence" value="ECO:0000315"/>
    <property type="project" value="UniProtKB"/>
</dbReference>
<dbReference type="GO" id="GO:0006913">
    <property type="term" value="P:nucleocytoplasmic transport"/>
    <property type="evidence" value="ECO:0000303"/>
    <property type="project" value="ComplexPortal"/>
</dbReference>
<dbReference type="GO" id="GO:0048339">
    <property type="term" value="P:paraxial mesoderm development"/>
    <property type="evidence" value="ECO:0007669"/>
    <property type="project" value="Ensembl"/>
</dbReference>
<dbReference type="GO" id="GO:0016973">
    <property type="term" value="P:poly(A)+ mRNA export from nucleus"/>
    <property type="evidence" value="ECO:0000318"/>
    <property type="project" value="GO_Central"/>
</dbReference>
<dbReference type="GO" id="GO:0006606">
    <property type="term" value="P:protein import into nucleus"/>
    <property type="evidence" value="ECO:0000318"/>
    <property type="project" value="GO_Central"/>
</dbReference>
<dbReference type="GO" id="GO:0061053">
    <property type="term" value="P:somite development"/>
    <property type="evidence" value="ECO:0007669"/>
    <property type="project" value="Ensembl"/>
</dbReference>
<dbReference type="GO" id="GO:0000972">
    <property type="term" value="P:transcription-dependent tethering of RNA polymerase II gene DNA at nuclear periphery"/>
    <property type="evidence" value="ECO:0000318"/>
    <property type="project" value="GO_Central"/>
</dbReference>
<dbReference type="DisProt" id="DP02164"/>
<dbReference type="FunFam" id="1.25.40.700:FF:000001">
    <property type="entry name" value="Nuclear pore complex protein"/>
    <property type="match status" value="1"/>
</dbReference>
<dbReference type="FunFam" id="1.20.58.1380:FF:000001">
    <property type="entry name" value="Nuclear pore complex protein Nup133"/>
    <property type="match status" value="1"/>
</dbReference>
<dbReference type="FunFam" id="2.130.10.10:FF:000238">
    <property type="entry name" value="Nuclear pore complex protein Nup133"/>
    <property type="match status" value="1"/>
</dbReference>
<dbReference type="Gene3D" id="1.20.58.1380">
    <property type="match status" value="1"/>
</dbReference>
<dbReference type="Gene3D" id="1.25.40.700">
    <property type="match status" value="1"/>
</dbReference>
<dbReference type="Gene3D" id="2.130.10.10">
    <property type="entry name" value="YVTN repeat-like/Quinoprotein amine dehydrogenase"/>
    <property type="match status" value="1"/>
</dbReference>
<dbReference type="IDEAL" id="IID00219"/>
<dbReference type="InterPro" id="IPR007187">
    <property type="entry name" value="Nucleoporin_Nup133/Nup155_C"/>
</dbReference>
<dbReference type="InterPro" id="IPR037624">
    <property type="entry name" value="Nup133-like"/>
</dbReference>
<dbReference type="InterPro" id="IPR015943">
    <property type="entry name" value="WD40/YVTN_repeat-like_dom_sf"/>
</dbReference>
<dbReference type="PANTHER" id="PTHR13405">
    <property type="entry name" value="NUCLEAR PORE COMPLEX PROTEIN NUP133"/>
    <property type="match status" value="1"/>
</dbReference>
<dbReference type="PANTHER" id="PTHR13405:SF11">
    <property type="entry name" value="NUCLEAR PORE COMPLEX PROTEIN NUP133"/>
    <property type="match status" value="1"/>
</dbReference>
<dbReference type="Pfam" id="PF03177">
    <property type="entry name" value="Nucleoporin_C"/>
    <property type="match status" value="1"/>
</dbReference>
<dbReference type="SUPFAM" id="SSF117289">
    <property type="entry name" value="Nucleoporin domain"/>
    <property type="match status" value="1"/>
</dbReference>
<name>NU133_HUMAN</name>
<gene>
    <name type="primary">NUP133</name>
</gene>
<organism evidence="10">
    <name type="scientific">Homo sapiens</name>
    <name type="common">Human</name>
    <dbReference type="NCBI Taxonomy" id="9606"/>
    <lineage>
        <taxon>Eukaryota</taxon>
        <taxon>Metazoa</taxon>
        <taxon>Chordata</taxon>
        <taxon>Craniata</taxon>
        <taxon>Vertebrata</taxon>
        <taxon>Euteleostomi</taxon>
        <taxon>Mammalia</taxon>
        <taxon>Eutheria</taxon>
        <taxon>Euarchontoglires</taxon>
        <taxon>Primates</taxon>
        <taxon>Haplorrhini</taxon>
        <taxon>Catarrhini</taxon>
        <taxon>Hominidae</taxon>
        <taxon>Homo</taxon>
    </lineage>
</organism>
<reference key="1">
    <citation type="journal article" date="2004" name="Nat. Genet.">
        <title>Complete sequencing and characterization of 21,243 full-length human cDNAs.</title>
        <authorList>
            <person name="Ota T."/>
            <person name="Suzuki Y."/>
            <person name="Nishikawa T."/>
            <person name="Otsuki T."/>
            <person name="Sugiyama T."/>
            <person name="Irie R."/>
            <person name="Wakamatsu A."/>
            <person name="Hayashi K."/>
            <person name="Sato H."/>
            <person name="Nagai K."/>
            <person name="Kimura K."/>
            <person name="Makita H."/>
            <person name="Sekine M."/>
            <person name="Obayashi M."/>
            <person name="Nishi T."/>
            <person name="Shibahara T."/>
            <person name="Tanaka T."/>
            <person name="Ishii S."/>
            <person name="Yamamoto J."/>
            <person name="Saito K."/>
            <person name="Kawai Y."/>
            <person name="Isono Y."/>
            <person name="Nakamura Y."/>
            <person name="Nagahari K."/>
            <person name="Murakami K."/>
            <person name="Yasuda T."/>
            <person name="Iwayanagi T."/>
            <person name="Wagatsuma M."/>
            <person name="Shiratori A."/>
            <person name="Sudo H."/>
            <person name="Hosoiri T."/>
            <person name="Kaku Y."/>
            <person name="Kodaira H."/>
            <person name="Kondo H."/>
            <person name="Sugawara M."/>
            <person name="Takahashi M."/>
            <person name="Kanda K."/>
            <person name="Yokoi T."/>
            <person name="Furuya T."/>
            <person name="Kikkawa E."/>
            <person name="Omura Y."/>
            <person name="Abe K."/>
            <person name="Kamihara K."/>
            <person name="Katsuta N."/>
            <person name="Sato K."/>
            <person name="Tanikawa M."/>
            <person name="Yamazaki M."/>
            <person name="Ninomiya K."/>
            <person name="Ishibashi T."/>
            <person name="Yamashita H."/>
            <person name="Murakawa K."/>
            <person name="Fujimori K."/>
            <person name="Tanai H."/>
            <person name="Kimata M."/>
            <person name="Watanabe M."/>
            <person name="Hiraoka S."/>
            <person name="Chiba Y."/>
            <person name="Ishida S."/>
            <person name="Ono Y."/>
            <person name="Takiguchi S."/>
            <person name="Watanabe S."/>
            <person name="Yosida M."/>
            <person name="Hotuta T."/>
            <person name="Kusano J."/>
            <person name="Kanehori K."/>
            <person name="Takahashi-Fujii A."/>
            <person name="Hara H."/>
            <person name="Tanase T.-O."/>
            <person name="Nomura Y."/>
            <person name="Togiya S."/>
            <person name="Komai F."/>
            <person name="Hara R."/>
            <person name="Takeuchi K."/>
            <person name="Arita M."/>
            <person name="Imose N."/>
            <person name="Musashino K."/>
            <person name="Yuuki H."/>
            <person name="Oshima A."/>
            <person name="Sasaki N."/>
            <person name="Aotsuka S."/>
            <person name="Yoshikawa Y."/>
            <person name="Matsunawa H."/>
            <person name="Ichihara T."/>
            <person name="Shiohata N."/>
            <person name="Sano S."/>
            <person name="Moriya S."/>
            <person name="Momiyama H."/>
            <person name="Satoh N."/>
            <person name="Takami S."/>
            <person name="Terashima Y."/>
            <person name="Suzuki O."/>
            <person name="Nakagawa S."/>
            <person name="Senoh A."/>
            <person name="Mizoguchi H."/>
            <person name="Goto Y."/>
            <person name="Shimizu F."/>
            <person name="Wakebe H."/>
            <person name="Hishigaki H."/>
            <person name="Watanabe T."/>
            <person name="Sugiyama A."/>
            <person name="Takemoto M."/>
            <person name="Kawakami B."/>
            <person name="Yamazaki M."/>
            <person name="Watanabe K."/>
            <person name="Kumagai A."/>
            <person name="Itakura S."/>
            <person name="Fukuzumi Y."/>
            <person name="Fujimori Y."/>
            <person name="Komiyama M."/>
            <person name="Tashiro H."/>
            <person name="Tanigami A."/>
            <person name="Fujiwara T."/>
            <person name="Ono T."/>
            <person name="Yamada K."/>
            <person name="Fujii Y."/>
            <person name="Ozaki K."/>
            <person name="Hirao M."/>
            <person name="Ohmori Y."/>
            <person name="Kawabata A."/>
            <person name="Hikiji T."/>
            <person name="Kobatake N."/>
            <person name="Inagaki H."/>
            <person name="Ikema Y."/>
            <person name="Okamoto S."/>
            <person name="Okitani R."/>
            <person name="Kawakami T."/>
            <person name="Noguchi S."/>
            <person name="Itoh T."/>
            <person name="Shigeta K."/>
            <person name="Senba T."/>
            <person name="Matsumura K."/>
            <person name="Nakajima Y."/>
            <person name="Mizuno T."/>
            <person name="Morinaga M."/>
            <person name="Sasaki M."/>
            <person name="Togashi T."/>
            <person name="Oyama M."/>
            <person name="Hata H."/>
            <person name="Watanabe M."/>
            <person name="Komatsu T."/>
            <person name="Mizushima-Sugano J."/>
            <person name="Satoh T."/>
            <person name="Shirai Y."/>
            <person name="Takahashi Y."/>
            <person name="Nakagawa K."/>
            <person name="Okumura K."/>
            <person name="Nagase T."/>
            <person name="Nomura N."/>
            <person name="Kikuchi H."/>
            <person name="Masuho Y."/>
            <person name="Yamashita R."/>
            <person name="Nakai K."/>
            <person name="Yada T."/>
            <person name="Nakamura Y."/>
            <person name="Ohara O."/>
            <person name="Isogai T."/>
            <person name="Sugano S."/>
        </authorList>
    </citation>
    <scope>NUCLEOTIDE SEQUENCE [LARGE SCALE MRNA]</scope>
    <source>
        <tissue>Placenta</tissue>
    </source>
</reference>
<reference key="2">
    <citation type="journal article" date="2006" name="Nature">
        <title>The DNA sequence and biological annotation of human chromosome 1.</title>
        <authorList>
            <person name="Gregory S.G."/>
            <person name="Barlow K.F."/>
            <person name="McLay K.E."/>
            <person name="Kaul R."/>
            <person name="Swarbreck D."/>
            <person name="Dunham A."/>
            <person name="Scott C.E."/>
            <person name="Howe K.L."/>
            <person name="Woodfine K."/>
            <person name="Spencer C.C.A."/>
            <person name="Jones M.C."/>
            <person name="Gillson C."/>
            <person name="Searle S."/>
            <person name="Zhou Y."/>
            <person name="Kokocinski F."/>
            <person name="McDonald L."/>
            <person name="Evans R."/>
            <person name="Phillips K."/>
            <person name="Atkinson A."/>
            <person name="Cooper R."/>
            <person name="Jones C."/>
            <person name="Hall R.E."/>
            <person name="Andrews T.D."/>
            <person name="Lloyd C."/>
            <person name="Ainscough R."/>
            <person name="Almeida J.P."/>
            <person name="Ambrose K.D."/>
            <person name="Anderson F."/>
            <person name="Andrew R.W."/>
            <person name="Ashwell R.I.S."/>
            <person name="Aubin K."/>
            <person name="Babbage A.K."/>
            <person name="Bagguley C.L."/>
            <person name="Bailey J."/>
            <person name="Beasley H."/>
            <person name="Bethel G."/>
            <person name="Bird C.P."/>
            <person name="Bray-Allen S."/>
            <person name="Brown J.Y."/>
            <person name="Brown A.J."/>
            <person name="Buckley D."/>
            <person name="Burton J."/>
            <person name="Bye J."/>
            <person name="Carder C."/>
            <person name="Chapman J.C."/>
            <person name="Clark S.Y."/>
            <person name="Clarke G."/>
            <person name="Clee C."/>
            <person name="Cobley V."/>
            <person name="Collier R.E."/>
            <person name="Corby N."/>
            <person name="Coville G.J."/>
            <person name="Davies J."/>
            <person name="Deadman R."/>
            <person name="Dunn M."/>
            <person name="Earthrowl M."/>
            <person name="Ellington A.G."/>
            <person name="Errington H."/>
            <person name="Frankish A."/>
            <person name="Frankland J."/>
            <person name="French L."/>
            <person name="Garner P."/>
            <person name="Garnett J."/>
            <person name="Gay L."/>
            <person name="Ghori M.R.J."/>
            <person name="Gibson R."/>
            <person name="Gilby L.M."/>
            <person name="Gillett W."/>
            <person name="Glithero R.J."/>
            <person name="Grafham D.V."/>
            <person name="Griffiths C."/>
            <person name="Griffiths-Jones S."/>
            <person name="Grocock R."/>
            <person name="Hammond S."/>
            <person name="Harrison E.S.I."/>
            <person name="Hart E."/>
            <person name="Haugen E."/>
            <person name="Heath P.D."/>
            <person name="Holmes S."/>
            <person name="Holt K."/>
            <person name="Howden P.J."/>
            <person name="Hunt A.R."/>
            <person name="Hunt S.E."/>
            <person name="Hunter G."/>
            <person name="Isherwood J."/>
            <person name="James R."/>
            <person name="Johnson C."/>
            <person name="Johnson D."/>
            <person name="Joy A."/>
            <person name="Kay M."/>
            <person name="Kershaw J.K."/>
            <person name="Kibukawa M."/>
            <person name="Kimberley A.M."/>
            <person name="King A."/>
            <person name="Knights A.J."/>
            <person name="Lad H."/>
            <person name="Laird G."/>
            <person name="Lawlor S."/>
            <person name="Leongamornlert D.A."/>
            <person name="Lloyd D.M."/>
            <person name="Loveland J."/>
            <person name="Lovell J."/>
            <person name="Lush M.J."/>
            <person name="Lyne R."/>
            <person name="Martin S."/>
            <person name="Mashreghi-Mohammadi M."/>
            <person name="Matthews L."/>
            <person name="Matthews N.S.W."/>
            <person name="McLaren S."/>
            <person name="Milne S."/>
            <person name="Mistry S."/>
            <person name="Moore M.J.F."/>
            <person name="Nickerson T."/>
            <person name="O'Dell C.N."/>
            <person name="Oliver K."/>
            <person name="Palmeiri A."/>
            <person name="Palmer S.A."/>
            <person name="Parker A."/>
            <person name="Patel D."/>
            <person name="Pearce A.V."/>
            <person name="Peck A.I."/>
            <person name="Pelan S."/>
            <person name="Phelps K."/>
            <person name="Phillimore B.J."/>
            <person name="Plumb R."/>
            <person name="Rajan J."/>
            <person name="Raymond C."/>
            <person name="Rouse G."/>
            <person name="Saenphimmachak C."/>
            <person name="Sehra H.K."/>
            <person name="Sheridan E."/>
            <person name="Shownkeen R."/>
            <person name="Sims S."/>
            <person name="Skuce C.D."/>
            <person name="Smith M."/>
            <person name="Steward C."/>
            <person name="Subramanian S."/>
            <person name="Sycamore N."/>
            <person name="Tracey A."/>
            <person name="Tromans A."/>
            <person name="Van Helmond Z."/>
            <person name="Wall M."/>
            <person name="Wallis J.M."/>
            <person name="White S."/>
            <person name="Whitehead S.L."/>
            <person name="Wilkinson J.E."/>
            <person name="Willey D.L."/>
            <person name="Williams H."/>
            <person name="Wilming L."/>
            <person name="Wray P.W."/>
            <person name="Wu Z."/>
            <person name="Coulson A."/>
            <person name="Vaudin M."/>
            <person name="Sulston J.E."/>
            <person name="Durbin R.M."/>
            <person name="Hubbard T."/>
            <person name="Wooster R."/>
            <person name="Dunham I."/>
            <person name="Carter N.P."/>
            <person name="McVean G."/>
            <person name="Ross M.T."/>
            <person name="Harrow J."/>
            <person name="Olson M.V."/>
            <person name="Beck S."/>
            <person name="Rogers J."/>
            <person name="Bentley D.R."/>
        </authorList>
    </citation>
    <scope>NUCLEOTIDE SEQUENCE [LARGE SCALE GENOMIC DNA]</scope>
</reference>
<reference key="3">
    <citation type="journal article" date="2004" name="Genome Res.">
        <title>The status, quality, and expansion of the NIH full-length cDNA project: the Mammalian Gene Collection (MGC).</title>
        <authorList>
            <consortium name="The MGC Project Team"/>
        </authorList>
    </citation>
    <scope>NUCLEOTIDE SEQUENCE [LARGE SCALE MRNA]</scope>
    <source>
        <tissue>Skin</tissue>
    </source>
</reference>
<reference evidence="9" key="4">
    <citation type="journal article" date="2001" name="J. Cell Biol.">
        <title>An evolutionarily conserved NPC subcomplex, which redistributes in part to kinetochores in mammalian cells.</title>
        <authorList>
            <person name="Belgareh N."/>
            <person name="Rabut G."/>
            <person name="Bai S.W."/>
            <person name="van Overbeek M."/>
            <person name="Beaudouin J."/>
            <person name="Daigle N."/>
            <person name="Zatsepina O.V."/>
            <person name="Pasteau F."/>
            <person name="Labas V."/>
            <person name="Fromont-Racine M."/>
            <person name="Ellenberg J."/>
            <person name="Doye V."/>
        </authorList>
    </citation>
    <scope>IDENTIFICATION</scope>
    <scope>SUBUNIT</scope>
    <scope>SUBCELLULAR LOCATION</scope>
</reference>
<reference evidence="9" key="5">
    <citation type="journal article" date="2001" name="J. Cell Biol.">
        <title>Novel vertebrate nucleoporins Nup133 and Nup160 play a role in mRNA export.</title>
        <authorList>
            <person name="Vasu S."/>
            <person name="Shah S."/>
            <person name="Orjalo A."/>
            <person name="Park M."/>
            <person name="Fischer W.H."/>
            <person name="Forbes D.J."/>
        </authorList>
    </citation>
    <scope>IDENTIFICATION</scope>
    <scope>FUNCTION</scope>
    <scope>SUBUNIT</scope>
    <scope>SUBCELLULAR LOCATION</scope>
</reference>
<reference key="6">
    <citation type="journal article" date="2006" name="Cell">
        <title>Global, in vivo, and site-specific phosphorylation dynamics in signaling networks.</title>
        <authorList>
            <person name="Olsen J.V."/>
            <person name="Blagoev B."/>
            <person name="Gnad F."/>
            <person name="Macek B."/>
            <person name="Kumar C."/>
            <person name="Mortensen P."/>
            <person name="Mann M."/>
        </authorList>
    </citation>
    <scope>PHOSPHORYLATION [LARGE SCALE ANALYSIS] AT SER-50</scope>
    <scope>IDENTIFICATION BY MASS SPECTROMETRY [LARGE SCALE ANALYSIS]</scope>
    <source>
        <tissue>Cervix carcinoma</tissue>
    </source>
</reference>
<reference key="7">
    <citation type="journal article" date="2006" name="Nat. Biotechnol.">
        <title>A probability-based approach for high-throughput protein phosphorylation analysis and site localization.</title>
        <authorList>
            <person name="Beausoleil S.A."/>
            <person name="Villen J."/>
            <person name="Gerber S.A."/>
            <person name="Rush J."/>
            <person name="Gygi S.P."/>
        </authorList>
    </citation>
    <scope>PHOSPHORYLATION [LARGE SCALE ANALYSIS] AT SER-45 AND SER-50</scope>
    <scope>IDENTIFICATION BY MASS SPECTROMETRY [LARGE SCALE ANALYSIS]</scope>
    <source>
        <tissue>Cervix carcinoma</tissue>
    </source>
</reference>
<reference key="8">
    <citation type="journal article" date="2008" name="J. Proteome Res.">
        <title>Combining protein-based IMAC, peptide-based IMAC, and MudPIT for efficient phosphoproteomic analysis.</title>
        <authorList>
            <person name="Cantin G.T."/>
            <person name="Yi W."/>
            <person name="Lu B."/>
            <person name="Park S.K."/>
            <person name="Xu T."/>
            <person name="Lee J.-D."/>
            <person name="Yates J.R. III"/>
        </authorList>
    </citation>
    <scope>PHOSPHORYLATION [LARGE SCALE ANALYSIS] AT SER-50</scope>
    <scope>IDENTIFICATION BY MASS SPECTROMETRY [LARGE SCALE ANALYSIS]</scope>
    <source>
        <tissue>Cervix carcinoma</tissue>
    </source>
</reference>
<reference key="9">
    <citation type="journal article" date="2008" name="Mol. Cell">
        <title>Kinase-selective enrichment enables quantitative phosphoproteomics of the kinome across the cell cycle.</title>
        <authorList>
            <person name="Daub H."/>
            <person name="Olsen J.V."/>
            <person name="Bairlein M."/>
            <person name="Gnad F."/>
            <person name="Oppermann F.S."/>
            <person name="Korner R."/>
            <person name="Greff Z."/>
            <person name="Keri G."/>
            <person name="Stemmann O."/>
            <person name="Mann M."/>
        </authorList>
    </citation>
    <scope>PHOSPHORYLATION [LARGE SCALE ANALYSIS] AT SER-50</scope>
    <scope>IDENTIFICATION BY MASS SPECTROMETRY [LARGE SCALE ANALYSIS]</scope>
    <source>
        <tissue>Cervix carcinoma</tissue>
    </source>
</reference>
<reference key="10">
    <citation type="journal article" date="2008" name="Proc. Natl. Acad. Sci. U.S.A.">
        <title>A quantitative atlas of mitotic phosphorylation.</title>
        <authorList>
            <person name="Dephoure N."/>
            <person name="Zhou C."/>
            <person name="Villen J."/>
            <person name="Beausoleil S.A."/>
            <person name="Bakalarski C.E."/>
            <person name="Elledge S.J."/>
            <person name="Gygi S.P."/>
        </authorList>
    </citation>
    <scope>PHOSPHORYLATION [LARGE SCALE ANALYSIS] AT SER-27; THR-28; SER-41; SER-45 AND SER-50</scope>
    <scope>IDENTIFICATION BY MASS SPECTROMETRY [LARGE SCALE ANALYSIS]</scope>
    <source>
        <tissue>Cervix carcinoma</tissue>
    </source>
</reference>
<reference key="11">
    <citation type="journal article" date="2009" name="Anal. Chem.">
        <title>Lys-N and trypsin cover complementary parts of the phosphoproteome in a refined SCX-based approach.</title>
        <authorList>
            <person name="Gauci S."/>
            <person name="Helbig A.O."/>
            <person name="Slijper M."/>
            <person name="Krijgsveld J."/>
            <person name="Heck A.J."/>
            <person name="Mohammed S."/>
        </authorList>
    </citation>
    <scope>IDENTIFICATION BY MASS SPECTROMETRY [LARGE SCALE ANALYSIS]</scope>
</reference>
<reference key="12">
    <citation type="journal article" date="2009" name="Sci. Signal.">
        <title>Quantitative phosphoproteomic analysis of T cell receptor signaling reveals system-wide modulation of protein-protein interactions.</title>
        <authorList>
            <person name="Mayya V."/>
            <person name="Lundgren D.H."/>
            <person name="Hwang S.-I."/>
            <person name="Rezaul K."/>
            <person name="Wu L."/>
            <person name="Eng J.K."/>
            <person name="Rodionov V."/>
            <person name="Han D.K."/>
        </authorList>
    </citation>
    <scope>PHOSPHORYLATION [LARGE SCALE ANALYSIS] AT SER-45; SER-50 AND SER-480</scope>
    <scope>IDENTIFICATION BY MASS SPECTROMETRY [LARGE SCALE ANALYSIS]</scope>
    <source>
        <tissue>Leukemic T-cell</tissue>
    </source>
</reference>
<reference key="13">
    <citation type="journal article" date="2010" name="Sci. Signal.">
        <title>Quantitative phosphoproteomics reveals widespread full phosphorylation site occupancy during mitosis.</title>
        <authorList>
            <person name="Olsen J.V."/>
            <person name="Vermeulen M."/>
            <person name="Santamaria A."/>
            <person name="Kumar C."/>
            <person name="Miller M.L."/>
            <person name="Jensen L.J."/>
            <person name="Gnad F."/>
            <person name="Cox J."/>
            <person name="Jensen T.S."/>
            <person name="Nigg E.A."/>
            <person name="Brunak S."/>
            <person name="Mann M."/>
        </authorList>
    </citation>
    <scope>ACETYLATION [LARGE SCALE ANALYSIS] AT MET-1</scope>
    <scope>PHOSPHORYLATION [LARGE SCALE ANALYSIS] AT SER-7; SER-27; THR-28; SER-45 AND SER-50</scope>
    <scope>IDENTIFICATION BY MASS SPECTROMETRY [LARGE SCALE ANALYSIS]</scope>
    <source>
        <tissue>Cervix carcinoma</tissue>
    </source>
</reference>
<reference key="14">
    <citation type="journal article" date="2011" name="BMC Syst. Biol.">
        <title>Initial characterization of the human central proteome.</title>
        <authorList>
            <person name="Burkard T.R."/>
            <person name="Planyavsky M."/>
            <person name="Kaupe I."/>
            <person name="Breitwieser F.P."/>
            <person name="Buerckstuemmer T."/>
            <person name="Bennett K.L."/>
            <person name="Superti-Furga G."/>
            <person name="Colinge J."/>
        </authorList>
    </citation>
    <scope>IDENTIFICATION BY MASS SPECTROMETRY [LARGE SCALE ANALYSIS]</scope>
</reference>
<reference key="15">
    <citation type="journal article" date="2012" name="Mol. Cell. Proteomics">
        <title>Comparative large-scale characterisation of plant vs. mammal proteins reveals similar and idiosyncratic N-alpha acetylation features.</title>
        <authorList>
            <person name="Bienvenut W.V."/>
            <person name="Sumpton D."/>
            <person name="Martinez A."/>
            <person name="Lilla S."/>
            <person name="Espagne C."/>
            <person name="Meinnel T."/>
            <person name="Giglione C."/>
        </authorList>
    </citation>
    <scope>ACETYLATION [LARGE SCALE ANALYSIS] AT MET-1</scope>
    <scope>IDENTIFICATION BY MASS SPECTROMETRY [LARGE SCALE ANALYSIS]</scope>
</reference>
<reference key="16">
    <citation type="journal article" date="2012" name="Proc. Natl. Acad. Sci. U.S.A.">
        <title>N-terminal acetylome analyses and functional insights of the N-terminal acetyltransferase NatB.</title>
        <authorList>
            <person name="Van Damme P."/>
            <person name="Lasa M."/>
            <person name="Polevoda B."/>
            <person name="Gazquez C."/>
            <person name="Elosegui-Artola A."/>
            <person name="Kim D.S."/>
            <person name="De Juan-Pardo E."/>
            <person name="Demeyer K."/>
            <person name="Hole K."/>
            <person name="Larrea E."/>
            <person name="Timmerman E."/>
            <person name="Prieto J."/>
            <person name="Arnesen T."/>
            <person name="Sherman F."/>
            <person name="Gevaert K."/>
            <person name="Aldabe R."/>
        </authorList>
    </citation>
    <scope>ACETYLATION [LARGE SCALE ANALYSIS] AT MET-1</scope>
    <scope>IDENTIFICATION BY MASS SPECTROMETRY [LARGE SCALE ANALYSIS]</scope>
</reference>
<reference key="17">
    <citation type="journal article" date="2013" name="J. Proteome Res.">
        <title>Toward a comprehensive characterization of a human cancer cell phosphoproteome.</title>
        <authorList>
            <person name="Zhou H."/>
            <person name="Di Palma S."/>
            <person name="Preisinger C."/>
            <person name="Peng M."/>
            <person name="Polat A.N."/>
            <person name="Heck A.J."/>
            <person name="Mohammed S."/>
        </authorList>
    </citation>
    <scope>PHOSPHORYLATION [LARGE SCALE ANALYSIS] AT SER-7; SER-15; SER-27; THR-28; SER-45; SER-50; SER-72; SER-131; SER-755 AND SER-1133</scope>
    <scope>IDENTIFICATION BY MASS SPECTROMETRY [LARGE SCALE ANALYSIS]</scope>
    <source>
        <tissue>Cervix carcinoma</tissue>
        <tissue>Erythroleukemia</tissue>
    </source>
</reference>
<reference key="18">
    <citation type="journal article" date="2014" name="J. Proteomics">
        <title>An enzyme assisted RP-RPLC approach for in-depth analysis of human liver phosphoproteome.</title>
        <authorList>
            <person name="Bian Y."/>
            <person name="Song C."/>
            <person name="Cheng K."/>
            <person name="Dong M."/>
            <person name="Wang F."/>
            <person name="Huang J."/>
            <person name="Sun D."/>
            <person name="Wang L."/>
            <person name="Ye M."/>
            <person name="Zou H."/>
        </authorList>
    </citation>
    <scope>IDENTIFICATION BY MASS SPECTROMETRY [LARGE SCALE ANALYSIS]</scope>
    <source>
        <tissue>Liver</tissue>
    </source>
</reference>
<reference key="19">
    <citation type="journal article" date="2014" name="Mol. Cell. Proteomics">
        <title>Immunoaffinity enrichment and mass spectrometry analysis of protein methylation.</title>
        <authorList>
            <person name="Guo A."/>
            <person name="Gu H."/>
            <person name="Zhou J."/>
            <person name="Mulhern D."/>
            <person name="Wang Y."/>
            <person name="Lee K.A."/>
            <person name="Yang V."/>
            <person name="Aguiar M."/>
            <person name="Kornhauser J."/>
            <person name="Jia X."/>
            <person name="Ren J."/>
            <person name="Beausoleil S.A."/>
            <person name="Silva J.C."/>
            <person name="Vemulapalli V."/>
            <person name="Bedford M.T."/>
            <person name="Comb M.J."/>
        </authorList>
    </citation>
    <scope>METHYLATION [LARGE SCALE ANALYSIS] AT ARG-17</scope>
    <scope>IDENTIFICATION BY MASS SPECTROMETRY [LARGE SCALE ANALYSIS]</scope>
    <source>
        <tissue>Colon carcinoma</tissue>
    </source>
</reference>
<reference key="20">
    <citation type="journal article" date="2015" name="Am. J. Hum. Genet.">
        <title>Biallelic mutations in nuclear pore complex subunit NUP107 cause early-childhood-onset steroid-resistant nephrotic syndrome.</title>
        <authorList>
            <person name="Miyake N."/>
            <person name="Tsukaguchi H."/>
            <person name="Koshimizu E."/>
            <person name="Shono A."/>
            <person name="Matsunaga S."/>
            <person name="Shiina M."/>
            <person name="Mimura Y."/>
            <person name="Imamura S."/>
            <person name="Hirose T."/>
            <person name="Okudela K."/>
            <person name="Nozu K."/>
            <person name="Akioka Y."/>
            <person name="Hattori M."/>
            <person name="Yoshikawa N."/>
            <person name="Kitamura A."/>
            <person name="Cheong H.I."/>
            <person name="Kagami S."/>
            <person name="Yamashita M."/>
            <person name="Fujita A."/>
            <person name="Miyatake S."/>
            <person name="Tsurusaki Y."/>
            <person name="Nakashima M."/>
            <person name="Saitsu H."/>
            <person name="Ohashi K."/>
            <person name="Imamoto N."/>
            <person name="Ryo A."/>
            <person name="Ogata K."/>
            <person name="Iijima K."/>
            <person name="Matsumoto N."/>
        </authorList>
    </citation>
    <scope>INTERACTION WITH NUP107</scope>
</reference>
<reference key="21">
    <citation type="journal article" date="2018" name="Ann. Neurol.">
        <title>Homozygous splicing mutation in NUP133 causes Galloway-Mowat syndrome.</title>
        <authorList>
            <person name="Fujita A."/>
            <person name="Tsukaguchi H."/>
            <person name="Koshimizu E."/>
            <person name="Nakazato H."/>
            <person name="Itoh K."/>
            <person name="Kuraoka S."/>
            <person name="Komohara Y."/>
            <person name="Shiina M."/>
            <person name="Nakamura S."/>
            <person name="Kitajima M."/>
            <person name="Tsurusaki Y."/>
            <person name="Miyatake S."/>
            <person name="Ogata K."/>
            <person name="Iijima K."/>
            <person name="Matsumoto N."/>
            <person name="Miyake N."/>
        </authorList>
    </citation>
    <scope>TISSUE SPECIFICITY</scope>
    <scope>INVOLVEMENT IN GAMOS8</scope>
</reference>
<reference key="22">
    <citation type="journal article" date="2019" name="Ann. Neurol.">
        <authorList>
            <person name="Fujita A."/>
            <person name="Tsukaguchi H."/>
            <person name="Koshimizu E."/>
            <person name="Nakazato H."/>
            <person name="Itoh K."/>
            <person name="Kuraoka S."/>
            <person name="Komohara Y."/>
            <person name="Shiina M."/>
            <person name="Nakamura S."/>
            <person name="Kitajima M."/>
            <person name="Tsurusaki Y."/>
            <person name="Miyatake S."/>
            <person name="Ogata K."/>
            <person name="Iijima K."/>
            <person name="Matsumoto N."/>
            <person name="Miyake N."/>
        </authorList>
    </citation>
    <scope>ERRATUM OF PUBMED:30427554</scope>
</reference>
<reference key="23">
    <citation type="journal article" date="2018" name="J. Clin. Invest.">
        <title>Mutations in multiple components of the nuclear pore complex cause nephrotic syndrome.</title>
        <authorList>
            <person name="Braun D.A."/>
            <person name="Lovric S."/>
            <person name="Schapiro D."/>
            <person name="Schneider R."/>
            <person name="Marquez J."/>
            <person name="Asif M."/>
            <person name="Hussain M.S."/>
            <person name="Daga A."/>
            <person name="Widmeier E."/>
            <person name="Rao J."/>
            <person name="Ashraf S."/>
            <person name="Tan W."/>
            <person name="Lusk C.P."/>
            <person name="Kolb A."/>
            <person name="Jobst-Schwan T."/>
            <person name="Schmidt J.M."/>
            <person name="Hoogstraten C.A."/>
            <person name="Eddy K."/>
            <person name="Kitzler T.M."/>
            <person name="Shril S."/>
            <person name="Moawia A."/>
            <person name="Schrage K."/>
            <person name="Khayyat A.I.A."/>
            <person name="Lawson J.A."/>
            <person name="Gee H.Y."/>
            <person name="Warejko J.K."/>
            <person name="Hermle T."/>
            <person name="Majmundar A.J."/>
            <person name="Hugo H."/>
            <person name="Budde B."/>
            <person name="Motameny S."/>
            <person name="Altmueller J."/>
            <person name="Noegel A.A."/>
            <person name="Fathy H.M."/>
            <person name="Gale D.P."/>
            <person name="Waseem S.S."/>
            <person name="Khan A."/>
            <person name="Kerecuk L."/>
            <person name="Hashmi S."/>
            <person name="Mohebbi N."/>
            <person name="Ettenger R."/>
            <person name="Serdaroglu E."/>
            <person name="Alhasan K.A."/>
            <person name="Hashem M."/>
            <person name="Goncalves S."/>
            <person name="Ariceta G."/>
            <person name="Ubetagoyena M."/>
            <person name="Antonin W."/>
            <person name="Baig S.M."/>
            <person name="Alkuraya F.S."/>
            <person name="Shen Q."/>
            <person name="Xu H."/>
            <person name="Antignac C."/>
            <person name="Lifton R.P."/>
            <person name="Mane S."/>
            <person name="Nuernberg P."/>
            <person name="Khokha M.K."/>
            <person name="Hildebrandt F."/>
        </authorList>
    </citation>
    <scope>FUNCTION</scope>
    <scope>INTERACTION WITH NUP107</scope>
    <scope>INVOLVEMENT IN NPHS18</scope>
    <scope>VARIANTS NPHS18 GLY-231; ARG-974 AND SER-1055</scope>
    <scope>CHARACTERIZATION OF VARIANTS NPHS18 GLY-231; ARG-974 AND SER-1055</scope>
</reference>
<reference key="24">
    <citation type="journal article" date="2004" name="J. Cell Biol.">
        <title>Structural and functional analysis of Nup133 domains reveals modular building blocks of the nuclear pore complex.</title>
        <authorList>
            <person name="Berke I.C."/>
            <person name="Boehmer T."/>
            <person name="Blobel G."/>
            <person name="Schwartz T.U."/>
        </authorList>
    </citation>
    <scope>X-RAY CRYSTALLOGRAPHY (2.35 ANGSTROMS) OF 67-514</scope>
</reference>
<reference key="25">
    <citation type="journal article" date="2006" name="Science">
        <title>The consensus coding sequences of human breast and colorectal cancers.</title>
        <authorList>
            <person name="Sjoeblom T."/>
            <person name="Jones S."/>
            <person name="Wood L.D."/>
            <person name="Parsons D.W."/>
            <person name="Lin J."/>
            <person name="Barber T.D."/>
            <person name="Mandelker D."/>
            <person name="Leary R.J."/>
            <person name="Ptak J."/>
            <person name="Silliman N."/>
            <person name="Szabo S."/>
            <person name="Buckhaults P."/>
            <person name="Farrell C."/>
            <person name="Meeh P."/>
            <person name="Markowitz S.D."/>
            <person name="Willis J."/>
            <person name="Dawson D."/>
            <person name="Willson J.K.V."/>
            <person name="Gazdar A.F."/>
            <person name="Hartigan J."/>
            <person name="Wu L."/>
            <person name="Liu C."/>
            <person name="Parmigiani G."/>
            <person name="Park B.H."/>
            <person name="Bachman K.E."/>
            <person name="Papadopoulos N."/>
            <person name="Vogelstein B."/>
            <person name="Kinzler K.W."/>
            <person name="Velculescu V.E."/>
        </authorList>
    </citation>
    <scope>VARIANTS [LARGE SCALE ANALYSIS] VAL-326 AND ARG-448</scope>
</reference>
<comment type="function">
    <text evidence="4 7">Involved in poly(A)+ RNA transport. Involved in nephrogenesis (PubMed:30179222).</text>
</comment>
<comment type="subunit">
    <text evidence="3 4 6 7">Forms part of the Nup160 subcomplex in the nuclear pore which is composed of NUP160, NUP133, NUP107 and Nup96. This complex plays a role in RNA export and in tethering Nup98 and NUP153 to the nucleus.</text>
</comment>
<comment type="interaction">
    <interactant intactId="EBI-295695">
        <id>Q8WUM0</id>
    </interactant>
    <interactant intactId="EBI-968343">
        <id>P49454</id>
        <label>CENPF</label>
    </interactant>
    <organismsDiffer>false</organismsDiffer>
    <experiments>2</experiments>
</comment>
<comment type="interaction">
    <interactant intactId="EBI-295695">
        <id>Q8WUM0</id>
    </interactant>
    <interactant intactId="EBI-5323863">
        <id>Q5S007</id>
        <label>LRRK2</label>
    </interactant>
    <organismsDiffer>false</organismsDiffer>
    <experiments>4</experiments>
</comment>
<comment type="interaction">
    <interactant intactId="EBI-295695">
        <id>Q8WUM0</id>
    </interactant>
    <interactant intactId="EBI-295687">
        <id>P57740</id>
        <label>NUP107</label>
    </interactant>
    <organismsDiffer>false</organismsDiffer>
    <experiments>17</experiments>
</comment>
<comment type="interaction">
    <interactant intactId="EBI-295695">
        <id>Q8WUM0</id>
    </interactant>
    <interactant intactId="EBI-716392">
        <id>Q9BW27</id>
        <label>NUP85</label>
    </interactant>
    <organismsDiffer>false</organismsDiffer>
    <experiments>5</experiments>
</comment>
<comment type="interaction">
    <interactant intactId="EBI-295695">
        <id>Q8WUM0</id>
    </interactant>
    <interactant intactId="EBI-12345">
        <id>P46673</id>
        <label>NUP85</label>
    </interactant>
    <organismsDiffer>true</organismsDiffer>
    <experiments>5</experiments>
</comment>
<comment type="subcellular location">
    <subcellularLocation>
        <location evidence="3 4">Nucleus</location>
        <location evidence="3 4">Nuclear pore complex</location>
    </subcellularLocation>
    <subcellularLocation>
        <location evidence="3">Chromosome</location>
        <location evidence="3">Centromere</location>
        <location evidence="3">Kinetochore</location>
    </subcellularLocation>
    <text evidence="3 4">Located on both the cytoplasmic and nuclear sides of the nuclear pore (PubMed:11564755). During mitosis, localizes to the kinetochores (PubMed:11564755).</text>
</comment>
<comment type="tissue specificity">
    <text evidence="8">Widely expressed in fetal and adult tissues. Expressed in the brain and kidney.</text>
</comment>
<comment type="disease" evidence="7">
    <disease id="DI-05379">
        <name>Nephrotic syndrome 18</name>
        <acronym>NPHS18</acronym>
        <description>A form of nephrotic syndrome, a renal disease clinically characterized by severe proteinuria, resulting in complications such as hypoalbuminemia, hyperlipidemia and edema. Kidney biopsies show non-specific histologic changes such as focal segmental glomerulosclerosis and diffuse mesangial proliferation. Some affected individuals have an inherited steroid-resistant form that progresses to end-stage renal failure. NPHS18 is an autosomal recessive, steroid-resistant progressive form with onset in the first decade of life.</description>
        <dbReference type="MIM" id="618177"/>
    </disease>
    <text>The disease is caused by variants affecting the gene represented in this entry.</text>
</comment>
<comment type="disease" evidence="8">
    <disease id="DI-05500">
        <name>Galloway-Mowat syndrome 8</name>
        <acronym>GAMOS8</acronym>
        <description>A form of Galloway-Mowat syndrome, a severe renal-neurological disease characterized by early-onset nephrotic syndrome associated with microcephaly, central nervous system abnormalities, developmental delays, and a propensity for seizures. Brain anomalies include gyration defects ranging from lissencephaly to pachygyria and polymicrogyria, and cerebellar hypoplasia. Most patients show facial dysmorphism characterized by a small, narrow forehead, large/floppy ears, deep-set eyes, hypertelorism and micrognathia. Additional variable features are visual impairment and arachnodactyly. Most patients die in early childhood. GAMOS8 inheritance is autosomal recessive.</description>
        <dbReference type="MIM" id="618349"/>
    </disease>
    <text>The disease is caused by variants affecting the gene represented in this entry.</text>
</comment>
<comment type="similarity">
    <text evidence="9">Belongs to the nucleoporin Nup133 family.</text>
</comment>
<comment type="sequence caution" evidence="9">
    <conflict type="erroneous initiation">
        <sequence resource="EMBL-CDS" id="BAA91885"/>
    </conflict>
</comment>
<comment type="sequence caution" evidence="9">
    <conflict type="erroneous initiation">
        <sequence resource="EMBL-CDS" id="BAB14106"/>
    </conflict>
</comment>
<feature type="chain" id="PRO_0000204838" description="Nuclear pore complex protein Nup133">
    <location>
        <begin position="1"/>
        <end position="1156"/>
    </location>
</feature>
<feature type="region of interest" description="Disordered" evidence="2">
    <location>
        <begin position="1"/>
        <end position="39"/>
    </location>
</feature>
<feature type="modified residue" description="N-acetylmethionine" evidence="17 18 19">
    <location>
        <position position="1"/>
    </location>
</feature>
<feature type="modified residue" description="Phosphoserine" evidence="17 20">
    <location>
        <position position="7"/>
    </location>
</feature>
<feature type="modified residue" description="Phosphoserine" evidence="20">
    <location>
        <position position="15"/>
    </location>
</feature>
<feature type="modified residue" description="Omega-N-methylarginine" evidence="21">
    <location>
        <position position="17"/>
    </location>
</feature>
<feature type="modified residue" description="Phosphoserine" evidence="14 17 20">
    <location>
        <position position="27"/>
    </location>
</feature>
<feature type="modified residue" description="Phosphothreonine" evidence="14 17 20">
    <location>
        <position position="28"/>
    </location>
</feature>
<feature type="modified residue" description="Omega-N-methylarginine" evidence="1">
    <location>
        <position position="30"/>
    </location>
</feature>
<feature type="modified residue" description="Phosphoserine" evidence="14">
    <location>
        <position position="41"/>
    </location>
</feature>
<feature type="modified residue" description="Phosphoserine" evidence="11 14 16 17 20">
    <location>
        <position position="45"/>
    </location>
</feature>
<feature type="modified residue" description="Phosphoserine" evidence="11 12 13 14 15 16 17 20">
    <location>
        <position position="50"/>
    </location>
</feature>
<feature type="modified residue" description="Phosphoserine" evidence="20">
    <location>
        <position position="72"/>
    </location>
</feature>
<feature type="modified residue" description="Phosphoserine" evidence="20">
    <location>
        <position position="131"/>
    </location>
</feature>
<feature type="modified residue" description="Phosphoserine" evidence="16">
    <location>
        <position position="480"/>
    </location>
</feature>
<feature type="modified residue" description="Phosphoserine" evidence="1">
    <location>
        <position position="489"/>
    </location>
</feature>
<feature type="modified residue" description="Phosphoserine" evidence="1">
    <location>
        <position position="493"/>
    </location>
</feature>
<feature type="modified residue" description="Phosphoserine" evidence="1">
    <location>
        <position position="501"/>
    </location>
</feature>
<feature type="modified residue" description="Phosphoserine" evidence="20">
    <location>
        <position position="755"/>
    </location>
</feature>
<feature type="modified residue" description="N6-acetyllysine" evidence="1">
    <location>
        <position position="787"/>
    </location>
</feature>
<feature type="modified residue" description="Phosphoserine" evidence="20">
    <location>
        <position position="1133"/>
    </location>
</feature>
<feature type="sequence variant" id="VAR_030829" description="In dbSNP:rs428231.">
    <original>T</original>
    <variation>P</variation>
    <location>
        <position position="106"/>
    </location>
</feature>
<feature type="sequence variant" id="VAR_081359" description="In NPHS18; decreased function in nephrogenesis; unable to fully rescue morpholino-induced nephrogenesis defects in Xenopus; dbSNP:rs1558108130." evidence="7">
    <original>R</original>
    <variation>G</variation>
    <location>
        <position position="231"/>
    </location>
</feature>
<feature type="sequence variant" id="VAR_030830" description="In dbSNP:rs11805194.">
    <original>I</original>
    <variation>V</variation>
    <location>
        <position position="294"/>
    </location>
</feature>
<feature type="sequence variant" id="VAR_035854" description="In a breast cancer sample; somatic mutation." evidence="5">
    <original>G</original>
    <variation>V</variation>
    <location>
        <position position="326"/>
    </location>
</feature>
<feature type="sequence variant" id="VAR_030831" description="In dbSNP:rs1065674.">
    <original>Q</original>
    <variation>R</variation>
    <location>
        <position position="406"/>
    </location>
</feature>
<feature type="sequence variant" id="VAR_035855" description="In a breast cancer sample; somatic mutation." evidence="5">
    <original>G</original>
    <variation>R</variation>
    <location>
        <position position="448"/>
    </location>
</feature>
<feature type="sequence variant" id="VAR_081360" description="In NPHS18; loss of function in nephrogenesis; unable to rescue morpholino-induced nephrogenesis defects in Xenopus; decreased interaction with NUP107; dbSNP:rs1558091788." evidence="7">
    <original>S</original>
    <variation>R</variation>
    <location>
        <position position="974"/>
    </location>
</feature>
<feature type="sequence variant" id="VAR_081361" description="In NPHS18; loss of function in nephrogenesis; unable to rescue morpholino-induced nephrogenesis defects in Xenopus; dbSNP:rs376476266." evidence="7">
    <original>L</original>
    <variation>S</variation>
    <location>
        <position position="1055"/>
    </location>
</feature>
<feature type="sequence conflict" description="In Ref. 1; BAA91829." evidence="9" ref="1">
    <original>R</original>
    <variation>G</variation>
    <location>
        <position position="61"/>
    </location>
</feature>
<feature type="sequence conflict" description="In Ref. 1; BAA91829." evidence="9" ref="1">
    <original>P</original>
    <variation>S</variation>
    <location>
        <position position="146"/>
    </location>
</feature>
<feature type="sequence conflict" description="In Ref. 3; AAH20107." evidence="9" ref="3">
    <original>L</original>
    <variation>F</variation>
    <location>
        <position position="345"/>
    </location>
</feature>
<feature type="sequence conflict" description="In Ref. 1; BAA91829." evidence="9" ref="1">
    <original>S</original>
    <variation>N</variation>
    <location>
        <position position="626"/>
    </location>
</feature>
<feature type="sequence conflict" description="In Ref. 1; BAA91885." evidence="9" ref="1">
    <original>F</original>
    <variation>L</variation>
    <location>
        <position position="928"/>
    </location>
</feature>
<feature type="strand" evidence="22">
    <location>
        <begin position="77"/>
        <end position="83"/>
    </location>
</feature>
<feature type="helix" evidence="22">
    <location>
        <begin position="90"/>
        <end position="98"/>
    </location>
</feature>
<feature type="strand" evidence="22">
    <location>
        <begin position="105"/>
        <end position="109"/>
    </location>
</feature>
<feature type="strand" evidence="22">
    <location>
        <begin position="113"/>
        <end position="119"/>
    </location>
</feature>
<feature type="strand" evidence="22">
    <location>
        <begin position="122"/>
        <end position="127"/>
    </location>
</feature>
<feature type="helix" evidence="22">
    <location>
        <begin position="134"/>
        <end position="136"/>
    </location>
</feature>
<feature type="strand" evidence="22">
    <location>
        <begin position="139"/>
        <end position="143"/>
    </location>
</feature>
<feature type="helix" evidence="22">
    <location>
        <begin position="153"/>
        <end position="155"/>
    </location>
</feature>
<feature type="strand" evidence="22">
    <location>
        <begin position="156"/>
        <end position="160"/>
    </location>
</feature>
<feature type="strand" evidence="22">
    <location>
        <begin position="172"/>
        <end position="178"/>
    </location>
</feature>
<feature type="strand" evidence="22">
    <location>
        <begin position="183"/>
        <end position="188"/>
    </location>
</feature>
<feature type="strand" evidence="22">
    <location>
        <begin position="197"/>
        <end position="200"/>
    </location>
</feature>
<feature type="strand" evidence="22">
    <location>
        <begin position="209"/>
        <end position="215"/>
    </location>
</feature>
<feature type="turn" evidence="22">
    <location>
        <begin position="216"/>
        <end position="218"/>
    </location>
</feature>
<feature type="strand" evidence="22">
    <location>
        <begin position="219"/>
        <end position="224"/>
    </location>
</feature>
<feature type="strand" evidence="22">
    <location>
        <begin position="229"/>
        <end position="234"/>
    </location>
</feature>
<feature type="strand" evidence="22">
    <location>
        <begin position="240"/>
        <end position="244"/>
    </location>
</feature>
<feature type="strand" evidence="22">
    <location>
        <begin position="274"/>
        <end position="280"/>
    </location>
</feature>
<feature type="turn" evidence="22">
    <location>
        <begin position="281"/>
        <end position="284"/>
    </location>
</feature>
<feature type="strand" evidence="22">
    <location>
        <begin position="285"/>
        <end position="299"/>
    </location>
</feature>
<feature type="strand" evidence="22">
    <location>
        <begin position="304"/>
        <end position="311"/>
    </location>
</feature>
<feature type="helix" evidence="22">
    <location>
        <begin position="312"/>
        <end position="325"/>
    </location>
</feature>
<feature type="helix" evidence="22">
    <location>
        <begin position="331"/>
        <end position="335"/>
    </location>
</feature>
<feature type="strand" evidence="22">
    <location>
        <begin position="339"/>
        <end position="348"/>
    </location>
</feature>
<feature type="strand" evidence="22">
    <location>
        <begin position="351"/>
        <end position="359"/>
    </location>
</feature>
<feature type="strand" evidence="22">
    <location>
        <begin position="363"/>
        <end position="365"/>
    </location>
</feature>
<feature type="strand" evidence="22">
    <location>
        <begin position="367"/>
        <end position="375"/>
    </location>
</feature>
<feature type="strand" evidence="22">
    <location>
        <begin position="386"/>
        <end position="390"/>
    </location>
</feature>
<feature type="helix" evidence="22">
    <location>
        <begin position="400"/>
        <end position="402"/>
    </location>
</feature>
<feature type="strand" evidence="22">
    <location>
        <begin position="406"/>
        <end position="408"/>
    </location>
</feature>
<feature type="strand" evidence="22">
    <location>
        <begin position="412"/>
        <end position="420"/>
    </location>
</feature>
<feature type="strand" evidence="22">
    <location>
        <begin position="422"/>
        <end position="429"/>
    </location>
</feature>
<feature type="strand" evidence="22">
    <location>
        <begin position="440"/>
        <end position="443"/>
    </location>
</feature>
<feature type="helix" evidence="22">
    <location>
        <begin position="446"/>
        <end position="448"/>
    </location>
</feature>
<feature type="strand" evidence="22">
    <location>
        <begin position="451"/>
        <end position="457"/>
    </location>
</feature>
<feature type="strand" evidence="22">
    <location>
        <begin position="460"/>
        <end position="465"/>
    </location>
</feature>
<feature type="turn" evidence="22">
    <location>
        <begin position="466"/>
        <end position="468"/>
    </location>
</feature>
<feature type="strand" evidence="22">
    <location>
        <begin position="469"/>
        <end position="475"/>
    </location>
</feature>
<feature type="helix" evidence="23">
    <location>
        <begin position="936"/>
        <end position="942"/>
    </location>
</feature>
<feature type="helix" evidence="23">
    <location>
        <begin position="946"/>
        <end position="959"/>
    </location>
</feature>
<feature type="helix" evidence="23">
    <location>
        <begin position="964"/>
        <end position="980"/>
    </location>
</feature>
<feature type="helix" evidence="23">
    <location>
        <begin position="985"/>
        <end position="1006"/>
    </location>
</feature>
<feature type="helix" evidence="23">
    <location>
        <begin position="1012"/>
        <end position="1015"/>
    </location>
</feature>
<feature type="strand" evidence="23">
    <location>
        <begin position="1020"/>
        <end position="1023"/>
    </location>
</feature>
<feature type="helix" evidence="23">
    <location>
        <begin position="1028"/>
        <end position="1034"/>
    </location>
</feature>
<feature type="helix" evidence="23">
    <location>
        <begin position="1045"/>
        <end position="1051"/>
    </location>
</feature>
<feature type="turn" evidence="23">
    <location>
        <begin position="1052"/>
        <end position="1057"/>
    </location>
</feature>
<feature type="helix" evidence="23">
    <location>
        <begin position="1067"/>
        <end position="1079"/>
    </location>
</feature>
<feature type="helix" evidence="23">
    <location>
        <begin position="1096"/>
        <end position="1102"/>
    </location>
</feature>
<feature type="helix" evidence="23">
    <location>
        <begin position="1125"/>
        <end position="1128"/>
    </location>
</feature>
<feature type="helix" evidence="23">
    <location>
        <begin position="1142"/>
        <end position="1155"/>
    </location>
</feature>
<keyword id="KW-0002">3D-structure</keyword>
<keyword id="KW-0007">Acetylation</keyword>
<keyword id="KW-0137">Centromere</keyword>
<keyword id="KW-0158">Chromosome</keyword>
<keyword id="KW-0225">Disease variant</keyword>
<keyword id="KW-0887">Epilepsy</keyword>
<keyword id="KW-0991">Intellectual disability</keyword>
<keyword id="KW-0995">Kinetochore</keyword>
<keyword id="KW-0488">Methylation</keyword>
<keyword id="KW-0509">mRNA transport</keyword>
<keyword id="KW-0906">Nuclear pore complex</keyword>
<keyword id="KW-0539">Nucleus</keyword>
<keyword id="KW-0597">Phosphoprotein</keyword>
<keyword id="KW-0653">Protein transport</keyword>
<keyword id="KW-1267">Proteomics identification</keyword>
<keyword id="KW-1185">Reference proteome</keyword>
<keyword id="KW-0811">Translocation</keyword>
<keyword id="KW-0813">Transport</keyword>
<protein>
    <recommendedName>
        <fullName>Nuclear pore complex protein Nup133</fullName>
    </recommendedName>
    <alternativeName>
        <fullName>133 kDa nucleoporin</fullName>
    </alternativeName>
    <alternativeName>
        <fullName>Nucleoporin Nup133</fullName>
    </alternativeName>
</protein>
<evidence type="ECO:0000250" key="1">
    <source>
        <dbReference type="UniProtKB" id="Q8R0G9"/>
    </source>
</evidence>
<evidence type="ECO:0000256" key="2">
    <source>
        <dbReference type="SAM" id="MobiDB-lite"/>
    </source>
</evidence>
<evidence type="ECO:0000269" key="3">
    <source>
    </source>
</evidence>
<evidence type="ECO:0000269" key="4">
    <source>
    </source>
</evidence>
<evidence type="ECO:0000269" key="5">
    <source>
    </source>
</evidence>
<evidence type="ECO:0000269" key="6">
    <source>
    </source>
</evidence>
<evidence type="ECO:0000269" key="7">
    <source>
    </source>
</evidence>
<evidence type="ECO:0000269" key="8">
    <source>
    </source>
</evidence>
<evidence type="ECO:0000305" key="9"/>
<evidence type="ECO:0000312" key="10">
    <source>
        <dbReference type="EMBL" id="AAH20107.1"/>
    </source>
</evidence>
<evidence type="ECO:0007744" key="11">
    <source>
    </source>
</evidence>
<evidence type="ECO:0007744" key="12">
    <source>
    </source>
</evidence>
<evidence type="ECO:0007744" key="13">
    <source>
    </source>
</evidence>
<evidence type="ECO:0007744" key="14">
    <source>
    </source>
</evidence>
<evidence type="ECO:0007744" key="15">
    <source>
    </source>
</evidence>
<evidence type="ECO:0007744" key="16">
    <source>
    </source>
</evidence>
<evidence type="ECO:0007744" key="17">
    <source>
    </source>
</evidence>
<evidence type="ECO:0007744" key="18">
    <source>
    </source>
</evidence>
<evidence type="ECO:0007744" key="19">
    <source>
    </source>
</evidence>
<evidence type="ECO:0007744" key="20">
    <source>
    </source>
</evidence>
<evidence type="ECO:0007744" key="21">
    <source>
    </source>
</evidence>
<evidence type="ECO:0007829" key="22">
    <source>
        <dbReference type="PDB" id="1XKS"/>
    </source>
</evidence>
<evidence type="ECO:0007829" key="23">
    <source>
        <dbReference type="PDB" id="3CQC"/>
    </source>
</evidence>
<sequence length="1156" mass="128979">MFPAAPSPRTPGTGSRRGPLAGLGPGSTPRTASRKGLPLGSAVSSPVLFSPVGRRSSLSSRGTPTRMFPHHSITESVNYDVKTFGSSLPVKVMEALTLAEVDDQLTINIDEGGWACLVCKEKLIIWKIALSPITKLSVCKELQLPPSDFHWSADLVALSYSSPSGEAHSTQAVAVMVATREGSIRYWPSLAGEDTYTEAFVDSGGDKTYSFLTAVQGGSFILSSSGSQLIRLIPESSGKIHQHILPQGQGMLSGIGRKVSSLFGILSPSSDLTLSSVLWDRERSSFYSLTSSNISKWELDDSSEKHAYSWDINRALKENITDAIWGSESNYEAIKEGVNIRYLDLKQNCDGLVILAAAWHSADNPCLIYYSLITIEDNGCQMSDAVTVEVTQYNPPFQSEDLILCQLTVPNFSNQTAYLYNESAVYVCSTGTGKFSLPQEKIVFNAQGDSVLGAGACGGVPIIFSRNSGLVSITSRENVSILAEDLEGSLASSVAGPNSESMIFETTTKNETIAQEDKIKLLKAAFLQYCRKDLGHAQMVVDELFSSHSDLDSDSELDRAVTQISVDLMDDYPASDPRWAESVPEEAPGFSNTSLIILHQLEDKMKAHSFLMDFIHQVGLFGRLGSFPVRGTPMATRLLLCEHAEKLSAAIVLKNHHSRLSDLVNTAILIALNKREYEIPSNLTPADVFFREVSQVDTICECLLEHEEQVLRDAPMDSIEWAEVVINVNNILKDMLQAASHYRQNRNSLYRREESLEKEPEYVPWTATSGPGGIRTVIIRQHEIVLKVAYPQADSNLRNIVTEQLVALIDCFLDGYVSQLKSVDKSSNRERYDNLEMEYLQKRSDLLSPLLSLGQYLWAASLAEKYCDFDILVQMCEQTDNQSRLQRYMTQFADQNFSDFLFRWYLEKGKRGKLLSQPISQHGQLANFLQAHEHLSWLHEINSQELEKAHATLLGLANMETRYFAKKKTLLGLSKLAALASDFSEDMLQEKIEEMAEQERFLLHQETLPEQLLAEKQLNLSAMPVLTAPQLIGLYICEENRRANEYDFKKALDLLEYIDEEEDININDLKLEILCKALQRDNWSSSDGKDDPIEVSKDSIFVKILQKLLKDGIQLSEYLPEVKDLLQADQLGSLKSNPYFEFVLKANYEYYVQGQI</sequence>
<proteinExistence type="evidence at protein level"/>
<accession>Q8WUM0</accession>
<accession>B2RAZ8</accession>
<accession>Q5T8N0</accession>
<accession>Q9H9W2</accession>
<accession>Q9NV71</accession>
<accession>Q9NVC4</accession>